<feature type="chain" id="PRO_0000269128" description="Small ribosomal subunit protein uS14B">
    <location>
        <begin position="1"/>
        <end position="61"/>
    </location>
</feature>
<feature type="binding site" evidence="1">
    <location>
        <position position="24"/>
    </location>
    <ligand>
        <name>Zn(2+)</name>
        <dbReference type="ChEBI" id="CHEBI:29105"/>
    </ligand>
</feature>
<feature type="binding site" evidence="1">
    <location>
        <position position="27"/>
    </location>
    <ligand>
        <name>Zn(2+)</name>
        <dbReference type="ChEBI" id="CHEBI:29105"/>
    </ligand>
</feature>
<feature type="binding site" evidence="1">
    <location>
        <position position="40"/>
    </location>
    <ligand>
        <name>Zn(2+)</name>
        <dbReference type="ChEBI" id="CHEBI:29105"/>
    </ligand>
</feature>
<feature type="binding site" evidence="1">
    <location>
        <position position="43"/>
    </location>
    <ligand>
        <name>Zn(2+)</name>
        <dbReference type="ChEBI" id="CHEBI:29105"/>
    </ligand>
</feature>
<feature type="helix" evidence="2">
    <location>
        <begin position="4"/>
        <end position="11"/>
    </location>
</feature>
<feature type="helix" evidence="2">
    <location>
        <begin position="17"/>
        <end position="19"/>
    </location>
</feature>
<feature type="turn" evidence="2">
    <location>
        <begin position="25"/>
        <end position="27"/>
    </location>
</feature>
<feature type="turn" evidence="2">
    <location>
        <begin position="35"/>
        <end position="37"/>
    </location>
</feature>
<feature type="helix" evidence="2">
    <location>
        <begin position="41"/>
        <end position="50"/>
    </location>
</feature>
<feature type="strand" evidence="2">
    <location>
        <begin position="56"/>
        <end position="58"/>
    </location>
</feature>
<reference key="1">
    <citation type="journal article" date="2004" name="Science">
        <title>The complete genome sequence of Propionibacterium acnes, a commensal of human skin.</title>
        <authorList>
            <person name="Brueggemann H."/>
            <person name="Henne A."/>
            <person name="Hoster F."/>
            <person name="Liesegang H."/>
            <person name="Wiezer A."/>
            <person name="Strittmatter A."/>
            <person name="Hujer S."/>
            <person name="Duerre P."/>
            <person name="Gottschalk G."/>
        </authorList>
    </citation>
    <scope>NUCLEOTIDE SEQUENCE [LARGE SCALE GENOMIC DNA]</scope>
    <source>
        <strain>DSM 16379 / KPA171202</strain>
    </source>
</reference>
<sequence>MAKTALKVKAARKPKFGVRAYTRCQRCGRPHSVYRKFGLCRICLREMAHAGQLPGVTKSSW</sequence>
<protein>
    <recommendedName>
        <fullName evidence="1">Small ribosomal subunit protein uS14B</fullName>
    </recommendedName>
    <alternativeName>
        <fullName>30S ribosomal protein S14 type Z</fullName>
    </alternativeName>
</protein>
<comment type="function">
    <text evidence="1">Binds 16S rRNA, required for the assembly of 30S particles and may also be responsible for determining the conformation of the 16S rRNA at the A site.</text>
</comment>
<comment type="cofactor">
    <cofactor evidence="1">
        <name>Zn(2+)</name>
        <dbReference type="ChEBI" id="CHEBI:29105"/>
    </cofactor>
    <text evidence="1">Binds 1 zinc ion per subunit.</text>
</comment>
<comment type="subunit">
    <text evidence="1">Part of the 30S ribosomal subunit. Contacts proteins S3 and S10.</text>
</comment>
<comment type="similarity">
    <text evidence="1">Belongs to the universal ribosomal protein uS14 family. Zinc-binding uS14 subfamily.</text>
</comment>
<accession>Q6A6N9</accession>
<gene>
    <name evidence="1" type="primary">rpsZ</name>
    <name evidence="1" type="synonym">rpsN1</name>
    <name type="ordered locus">PPA1849</name>
</gene>
<organism>
    <name type="scientific">Cutibacterium acnes (strain DSM 16379 / KPA171202)</name>
    <name type="common">Propionibacterium acnes</name>
    <dbReference type="NCBI Taxonomy" id="267747"/>
    <lineage>
        <taxon>Bacteria</taxon>
        <taxon>Bacillati</taxon>
        <taxon>Actinomycetota</taxon>
        <taxon>Actinomycetes</taxon>
        <taxon>Propionibacteriales</taxon>
        <taxon>Propionibacteriaceae</taxon>
        <taxon>Cutibacterium</taxon>
    </lineage>
</organism>
<dbReference type="EMBL" id="AE017283">
    <property type="protein sequence ID" value="AAT83574.1"/>
    <property type="molecule type" value="Genomic_DNA"/>
</dbReference>
<dbReference type="RefSeq" id="WP_002515981.1">
    <property type="nucleotide sequence ID" value="NZ_CP025935.1"/>
</dbReference>
<dbReference type="PDB" id="8CRX">
    <property type="method" value="EM"/>
    <property type="resolution" value="2.78 A"/>
    <property type="chains" value="S=1-61"/>
</dbReference>
<dbReference type="PDB" id="8CVO">
    <property type="method" value="EM"/>
    <property type="resolution" value="2.95 A"/>
    <property type="chains" value="S=1-61"/>
</dbReference>
<dbReference type="PDBsum" id="8CRX"/>
<dbReference type="PDBsum" id="8CVO"/>
<dbReference type="SMR" id="Q6A6N9"/>
<dbReference type="EnsemblBacteria" id="AAT83574">
    <property type="protein sequence ID" value="AAT83574"/>
    <property type="gene ID" value="PPA1849"/>
</dbReference>
<dbReference type="KEGG" id="pac:PPA1849"/>
<dbReference type="eggNOG" id="COG0199">
    <property type="taxonomic scope" value="Bacteria"/>
</dbReference>
<dbReference type="HOGENOM" id="CLU_139869_3_0_11"/>
<dbReference type="Proteomes" id="UP000000603">
    <property type="component" value="Chromosome"/>
</dbReference>
<dbReference type="GO" id="GO:0005737">
    <property type="term" value="C:cytoplasm"/>
    <property type="evidence" value="ECO:0007669"/>
    <property type="project" value="UniProtKB-ARBA"/>
</dbReference>
<dbReference type="GO" id="GO:0015935">
    <property type="term" value="C:small ribosomal subunit"/>
    <property type="evidence" value="ECO:0007669"/>
    <property type="project" value="TreeGrafter"/>
</dbReference>
<dbReference type="GO" id="GO:0019843">
    <property type="term" value="F:rRNA binding"/>
    <property type="evidence" value="ECO:0007669"/>
    <property type="project" value="UniProtKB-UniRule"/>
</dbReference>
<dbReference type="GO" id="GO:0003735">
    <property type="term" value="F:structural constituent of ribosome"/>
    <property type="evidence" value="ECO:0007669"/>
    <property type="project" value="InterPro"/>
</dbReference>
<dbReference type="GO" id="GO:0008270">
    <property type="term" value="F:zinc ion binding"/>
    <property type="evidence" value="ECO:0007669"/>
    <property type="project" value="UniProtKB-UniRule"/>
</dbReference>
<dbReference type="GO" id="GO:0006412">
    <property type="term" value="P:translation"/>
    <property type="evidence" value="ECO:0007669"/>
    <property type="project" value="UniProtKB-UniRule"/>
</dbReference>
<dbReference type="FunFam" id="4.10.830.10:FF:000001">
    <property type="entry name" value="30S ribosomal protein S14 type Z"/>
    <property type="match status" value="1"/>
</dbReference>
<dbReference type="Gene3D" id="4.10.830.10">
    <property type="entry name" value="30s Ribosomal Protein S14, Chain N"/>
    <property type="match status" value="1"/>
</dbReference>
<dbReference type="HAMAP" id="MF_01364_B">
    <property type="entry name" value="Ribosomal_uS14_2_B"/>
    <property type="match status" value="1"/>
</dbReference>
<dbReference type="InterPro" id="IPR001209">
    <property type="entry name" value="Ribosomal_uS14"/>
</dbReference>
<dbReference type="InterPro" id="IPR023053">
    <property type="entry name" value="Ribosomal_uS14_bact"/>
</dbReference>
<dbReference type="InterPro" id="IPR018271">
    <property type="entry name" value="Ribosomal_uS14_CS"/>
</dbReference>
<dbReference type="InterPro" id="IPR043140">
    <property type="entry name" value="Ribosomal_uS14_sf"/>
</dbReference>
<dbReference type="NCBIfam" id="NF005974">
    <property type="entry name" value="PRK08061.1"/>
    <property type="match status" value="1"/>
</dbReference>
<dbReference type="PANTHER" id="PTHR19836">
    <property type="entry name" value="30S RIBOSOMAL PROTEIN S14"/>
    <property type="match status" value="1"/>
</dbReference>
<dbReference type="PANTHER" id="PTHR19836:SF19">
    <property type="entry name" value="SMALL RIBOSOMAL SUBUNIT PROTEIN US14M"/>
    <property type="match status" value="1"/>
</dbReference>
<dbReference type="Pfam" id="PF00253">
    <property type="entry name" value="Ribosomal_S14"/>
    <property type="match status" value="1"/>
</dbReference>
<dbReference type="SUPFAM" id="SSF57716">
    <property type="entry name" value="Glucocorticoid receptor-like (DNA-binding domain)"/>
    <property type="match status" value="1"/>
</dbReference>
<dbReference type="PROSITE" id="PS00527">
    <property type="entry name" value="RIBOSOMAL_S14"/>
    <property type="match status" value="1"/>
</dbReference>
<evidence type="ECO:0000255" key="1">
    <source>
        <dbReference type="HAMAP-Rule" id="MF_01364"/>
    </source>
</evidence>
<evidence type="ECO:0007829" key="2">
    <source>
        <dbReference type="PDB" id="8CVO"/>
    </source>
</evidence>
<proteinExistence type="evidence at protein level"/>
<keyword id="KW-0002">3D-structure</keyword>
<keyword id="KW-0479">Metal-binding</keyword>
<keyword id="KW-0687">Ribonucleoprotein</keyword>
<keyword id="KW-0689">Ribosomal protein</keyword>
<keyword id="KW-0694">RNA-binding</keyword>
<keyword id="KW-0699">rRNA-binding</keyword>
<keyword id="KW-0862">Zinc</keyword>
<name>RS14Z_CUTAK</name>